<reference key="1">
    <citation type="journal article" date="2005" name="Genome Res.">
        <title>Complete genome sequence of the hyperthermophilic archaeon Thermococcus kodakaraensis KOD1 and comparison with Pyrococcus genomes.</title>
        <authorList>
            <person name="Fukui T."/>
            <person name="Atomi H."/>
            <person name="Kanai T."/>
            <person name="Matsumi R."/>
            <person name="Fujiwara S."/>
            <person name="Imanaka T."/>
        </authorList>
    </citation>
    <scope>NUCLEOTIDE SEQUENCE [LARGE SCALE GENOMIC DNA]</scope>
    <source>
        <strain>ATCC BAA-918 / JCM 12380 / KOD1</strain>
    </source>
</reference>
<reference evidence="4 5 6" key="2">
    <citation type="journal article" date="2020" name="Nature">
        <title>Dynamic RNA acetylation revealed by quantitative cross-evolutionary mapping.</title>
        <authorList>
            <person name="Sas-Chen A."/>
            <person name="Thomas J.M."/>
            <person name="Matzov D."/>
            <person name="Taoka M."/>
            <person name="Nance K.D."/>
            <person name="Nir R."/>
            <person name="Bryson K.M."/>
            <person name="Shachar R."/>
            <person name="Liman G.L.S."/>
            <person name="Burkhart B.W."/>
            <person name="Gamage S.T."/>
            <person name="Nobe Y."/>
            <person name="Briney C.A."/>
            <person name="Levy M.J."/>
            <person name="Fuchs R.T."/>
            <person name="Robb G.B."/>
            <person name="Hartmann J."/>
            <person name="Sharma S."/>
            <person name="Lin Q."/>
            <person name="Florens L."/>
            <person name="Washburn M.P."/>
            <person name="Isobe T."/>
            <person name="Santangelo T.J."/>
            <person name="Shalev-Benami M."/>
            <person name="Meier J.L."/>
            <person name="Schwartz S."/>
        </authorList>
    </citation>
    <scope>STRUCTURE BY ELECTRON MICROSCOPY (2.55 ANGSTROMS) IN 70S RIBOSOME</scope>
    <scope>SUBUNIT</scope>
    <source>
        <strain>ATCC BAA-918 / TS559</strain>
    </source>
</reference>
<gene>
    <name evidence="1" type="primary">rpl7ae</name>
    <name type="ordered locus">TK1311</name>
</gene>
<sequence>MAKPSYVKFEVPQELAEKALEAVEIARDTGRIRKGTNETTKAVERGQAKLVIIAEDVDPEEIVAHLPPLCEEKEIPYVYVPSKKELGAAAGLEVPAASVAIIEPGKARELVEDIAMKVKELMK</sequence>
<evidence type="ECO:0000255" key="1">
    <source>
        <dbReference type="HAMAP-Rule" id="MF_00326"/>
    </source>
</evidence>
<evidence type="ECO:0000269" key="2">
    <source>
    </source>
</evidence>
<evidence type="ECO:0000305" key="3"/>
<evidence type="ECO:0007744" key="4">
    <source>
        <dbReference type="PDB" id="6SKF"/>
    </source>
</evidence>
<evidence type="ECO:0007744" key="5">
    <source>
        <dbReference type="PDB" id="6SKG"/>
    </source>
</evidence>
<evidence type="ECO:0007744" key="6">
    <source>
        <dbReference type="PDB" id="6TH6"/>
    </source>
</evidence>
<name>RL7A_THEKO</name>
<keyword id="KW-0002">3D-structure</keyword>
<keyword id="KW-0963">Cytoplasm</keyword>
<keyword id="KW-1185">Reference proteome</keyword>
<keyword id="KW-0687">Ribonucleoprotein</keyword>
<keyword id="KW-0689">Ribosomal protein</keyword>
<keyword id="KW-0694">RNA-binding</keyword>
<keyword id="KW-0699">rRNA-binding</keyword>
<keyword id="KW-0819">tRNA processing</keyword>
<accession>Q5JGR3</accession>
<organism>
    <name type="scientific">Thermococcus kodakarensis (strain ATCC BAA-918 / JCM 12380 / KOD1)</name>
    <name type="common">Pyrococcus kodakaraensis (strain KOD1)</name>
    <dbReference type="NCBI Taxonomy" id="69014"/>
    <lineage>
        <taxon>Archaea</taxon>
        <taxon>Methanobacteriati</taxon>
        <taxon>Methanobacteriota</taxon>
        <taxon>Thermococci</taxon>
        <taxon>Thermococcales</taxon>
        <taxon>Thermococcaceae</taxon>
        <taxon>Thermococcus</taxon>
    </lineage>
</organism>
<proteinExistence type="evidence at protein level"/>
<comment type="function">
    <text evidence="1">Multifunctional RNA-binding protein that recognizes the K-turn motif in ribosomal RNA, the RNA component of RNase P, box H/ACA, box C/D and box C'/D' sRNAs.</text>
</comment>
<comment type="subunit">
    <text evidence="1 2">Part of the 50S ribosomal subunit (PubMed:32555463). Probably part of the RNase P complex.</text>
</comment>
<comment type="subcellular location">
    <subcellularLocation>
        <location evidence="1">Cytoplasm</location>
    </subcellularLocation>
</comment>
<comment type="similarity">
    <text evidence="1">Belongs to the eukaryotic ribosomal protein eL8 family.</text>
</comment>
<comment type="sequence caution" evidence="3">
    <conflict type="erroneous initiation">
        <sequence resource="EMBL-CDS" id="BAD85500"/>
    </conflict>
    <text>Extended N-terminus.</text>
</comment>
<feature type="chain" id="PRO_0000136804" description="Large ribosomal subunit protein eL8">
    <location>
        <begin position="1"/>
        <end position="123"/>
    </location>
</feature>
<dbReference type="EMBL" id="AP006878">
    <property type="protein sequence ID" value="BAD85500.1"/>
    <property type="status" value="ALT_INIT"/>
    <property type="molecule type" value="Genomic_DNA"/>
</dbReference>
<dbReference type="RefSeq" id="WP_048053845.1">
    <property type="nucleotide sequence ID" value="NC_006624.1"/>
</dbReference>
<dbReference type="PDB" id="6SKF">
    <property type="method" value="EM"/>
    <property type="resolution" value="2.95 A"/>
    <property type="chains" value="BH/BI=1-123"/>
</dbReference>
<dbReference type="PDB" id="6SKG">
    <property type="method" value="EM"/>
    <property type="resolution" value="2.65 A"/>
    <property type="chains" value="BH/BI=1-123"/>
</dbReference>
<dbReference type="PDB" id="6TH6">
    <property type="method" value="EM"/>
    <property type="resolution" value="2.55 A"/>
    <property type="chains" value="BH/BI=1-123"/>
</dbReference>
<dbReference type="PDBsum" id="6SKF"/>
<dbReference type="PDBsum" id="6SKG"/>
<dbReference type="PDBsum" id="6TH6"/>
<dbReference type="EMDB" id="EMD-10223"/>
<dbReference type="EMDB" id="EMD-10224"/>
<dbReference type="EMDB" id="EMD-10503"/>
<dbReference type="SMR" id="Q5JGR3"/>
<dbReference type="FunCoup" id="Q5JGR3">
    <property type="interactions" value="158"/>
</dbReference>
<dbReference type="STRING" id="69014.TK1311"/>
<dbReference type="EnsemblBacteria" id="BAD85500">
    <property type="protein sequence ID" value="BAD85500"/>
    <property type="gene ID" value="TK1311"/>
</dbReference>
<dbReference type="GeneID" id="78447831"/>
<dbReference type="KEGG" id="tko:TK1311"/>
<dbReference type="PATRIC" id="fig|69014.16.peg.1283"/>
<dbReference type="eggNOG" id="arCOG01751">
    <property type="taxonomic scope" value="Archaea"/>
</dbReference>
<dbReference type="HOGENOM" id="CLU_084513_4_0_2"/>
<dbReference type="InParanoid" id="Q5JGR3"/>
<dbReference type="OrthoDB" id="25810at2157"/>
<dbReference type="PhylomeDB" id="Q5JGR3"/>
<dbReference type="Proteomes" id="UP000000536">
    <property type="component" value="Chromosome"/>
</dbReference>
<dbReference type="GO" id="GO:0005737">
    <property type="term" value="C:cytoplasm"/>
    <property type="evidence" value="ECO:0007669"/>
    <property type="project" value="UniProtKB-SubCell"/>
</dbReference>
<dbReference type="GO" id="GO:1990904">
    <property type="term" value="C:ribonucleoprotein complex"/>
    <property type="evidence" value="ECO:0007669"/>
    <property type="project" value="UniProtKB-KW"/>
</dbReference>
<dbReference type="GO" id="GO:0005840">
    <property type="term" value="C:ribosome"/>
    <property type="evidence" value="ECO:0007669"/>
    <property type="project" value="UniProtKB-KW"/>
</dbReference>
<dbReference type="GO" id="GO:0004526">
    <property type="term" value="F:ribonuclease P activity"/>
    <property type="evidence" value="ECO:0007669"/>
    <property type="project" value="UniProtKB-UniRule"/>
</dbReference>
<dbReference type="GO" id="GO:0019843">
    <property type="term" value="F:rRNA binding"/>
    <property type="evidence" value="ECO:0007669"/>
    <property type="project" value="UniProtKB-KW"/>
</dbReference>
<dbReference type="GO" id="GO:0003735">
    <property type="term" value="F:structural constituent of ribosome"/>
    <property type="evidence" value="ECO:0007669"/>
    <property type="project" value="InterPro"/>
</dbReference>
<dbReference type="GO" id="GO:0042254">
    <property type="term" value="P:ribosome biogenesis"/>
    <property type="evidence" value="ECO:0007669"/>
    <property type="project" value="InterPro"/>
</dbReference>
<dbReference type="GO" id="GO:0006412">
    <property type="term" value="P:translation"/>
    <property type="evidence" value="ECO:0007669"/>
    <property type="project" value="UniProtKB-UniRule"/>
</dbReference>
<dbReference type="GO" id="GO:0001682">
    <property type="term" value="P:tRNA 5'-leader removal"/>
    <property type="evidence" value="ECO:0007669"/>
    <property type="project" value="UniProtKB-UniRule"/>
</dbReference>
<dbReference type="FunFam" id="3.30.1330.30:FF:000020">
    <property type="entry name" value="50S ribosomal protein L7Ae"/>
    <property type="match status" value="1"/>
</dbReference>
<dbReference type="Gene3D" id="3.30.1330.30">
    <property type="match status" value="1"/>
</dbReference>
<dbReference type="HAMAP" id="MF_00326">
    <property type="entry name" value="Ribosomal_eL8"/>
    <property type="match status" value="1"/>
</dbReference>
<dbReference type="InterPro" id="IPR050257">
    <property type="entry name" value="eL8/uL1-like"/>
</dbReference>
<dbReference type="InterPro" id="IPR029064">
    <property type="entry name" value="Ribosomal_eL30-like_sf"/>
</dbReference>
<dbReference type="InterPro" id="IPR004037">
    <property type="entry name" value="Ribosomal_eL8-like_CS"/>
</dbReference>
<dbReference type="InterPro" id="IPR004038">
    <property type="entry name" value="Ribosomal_eL8/eL30/eS12/Gad45"/>
</dbReference>
<dbReference type="InterPro" id="IPR018492">
    <property type="entry name" value="Ribosomal_eL8/Nhp2"/>
</dbReference>
<dbReference type="InterPro" id="IPR022481">
    <property type="entry name" value="Ribosomal_eL8_arc"/>
</dbReference>
<dbReference type="NCBIfam" id="TIGR03677">
    <property type="entry name" value="eL8_ribo"/>
    <property type="match status" value="1"/>
</dbReference>
<dbReference type="PANTHER" id="PTHR23105">
    <property type="entry name" value="RIBOSOMAL PROTEIN L7AE FAMILY MEMBER"/>
    <property type="match status" value="1"/>
</dbReference>
<dbReference type="Pfam" id="PF01248">
    <property type="entry name" value="Ribosomal_L7Ae"/>
    <property type="match status" value="1"/>
</dbReference>
<dbReference type="PRINTS" id="PR00881">
    <property type="entry name" value="L7ARS6FAMILY"/>
</dbReference>
<dbReference type="PRINTS" id="PR00884">
    <property type="entry name" value="RIBOSOMALHS6"/>
</dbReference>
<dbReference type="SUPFAM" id="SSF55315">
    <property type="entry name" value="L30e-like"/>
    <property type="match status" value="1"/>
</dbReference>
<dbReference type="PROSITE" id="PS01082">
    <property type="entry name" value="RIBOSOMAL_L7AE"/>
    <property type="match status" value="1"/>
</dbReference>
<protein>
    <recommendedName>
        <fullName evidence="1">Large ribosomal subunit protein eL8</fullName>
    </recommendedName>
    <alternativeName>
        <fullName evidence="3">50S ribosomal protein L7Ae</fullName>
    </alternativeName>
    <alternativeName>
        <fullName evidence="1">Ribosomal protein L8e</fullName>
    </alternativeName>
</protein>